<keyword id="KW-0131">Cell cycle</keyword>
<keyword id="KW-0132">Cell division</keyword>
<keyword id="KW-0997">Cell inner membrane</keyword>
<keyword id="KW-1003">Cell membrane</keyword>
<keyword id="KW-0133">Cell shape</keyword>
<keyword id="KW-0961">Cell wall biogenesis/degradation</keyword>
<keyword id="KW-0460">Magnesium</keyword>
<keyword id="KW-0472">Membrane</keyword>
<keyword id="KW-0479">Metal-binding</keyword>
<keyword id="KW-0573">Peptidoglycan synthesis</keyword>
<keyword id="KW-0808">Transferase</keyword>
<keyword id="KW-0812">Transmembrane</keyword>
<keyword id="KW-1133">Transmembrane helix</keyword>
<accession>B1JK84</accession>
<organism>
    <name type="scientific">Yersinia pseudotuberculosis serotype O:3 (strain YPIII)</name>
    <dbReference type="NCBI Taxonomy" id="502800"/>
    <lineage>
        <taxon>Bacteria</taxon>
        <taxon>Pseudomonadati</taxon>
        <taxon>Pseudomonadota</taxon>
        <taxon>Gammaproteobacteria</taxon>
        <taxon>Enterobacterales</taxon>
        <taxon>Yersiniaceae</taxon>
        <taxon>Yersinia</taxon>
    </lineage>
</organism>
<reference key="1">
    <citation type="submission" date="2008-02" db="EMBL/GenBank/DDBJ databases">
        <title>Complete sequence of Yersinia pseudotuberculosis YPIII.</title>
        <authorList>
            <consortium name="US DOE Joint Genome Institute"/>
            <person name="Copeland A."/>
            <person name="Lucas S."/>
            <person name="Lapidus A."/>
            <person name="Glavina del Rio T."/>
            <person name="Dalin E."/>
            <person name="Tice H."/>
            <person name="Bruce D."/>
            <person name="Goodwin L."/>
            <person name="Pitluck S."/>
            <person name="Munk A.C."/>
            <person name="Brettin T."/>
            <person name="Detter J.C."/>
            <person name="Han C."/>
            <person name="Tapia R."/>
            <person name="Schmutz J."/>
            <person name="Larimer F."/>
            <person name="Land M."/>
            <person name="Hauser L."/>
            <person name="Challacombe J.F."/>
            <person name="Green L."/>
            <person name="Lindler L.E."/>
            <person name="Nikolich M.P."/>
            <person name="Richardson P."/>
        </authorList>
    </citation>
    <scope>NUCLEOTIDE SEQUENCE [LARGE SCALE GENOMIC DNA]</scope>
    <source>
        <strain>YPIII</strain>
    </source>
</reference>
<evidence type="ECO:0000255" key="1">
    <source>
        <dbReference type="HAMAP-Rule" id="MF_00038"/>
    </source>
</evidence>
<gene>
    <name evidence="1" type="primary">mraY</name>
    <name type="ordered locus">YPK_3521</name>
</gene>
<proteinExistence type="inferred from homology"/>
<name>MRAY_YERPY</name>
<dbReference type="EC" id="2.7.8.13" evidence="1"/>
<dbReference type="EMBL" id="CP000950">
    <property type="protein sequence ID" value="ACA69788.1"/>
    <property type="molecule type" value="Genomic_DNA"/>
</dbReference>
<dbReference type="RefSeq" id="WP_002210437.1">
    <property type="nucleotide sequence ID" value="NZ_CP009792.1"/>
</dbReference>
<dbReference type="SMR" id="B1JK84"/>
<dbReference type="GeneID" id="57974063"/>
<dbReference type="KEGG" id="ypy:YPK_3521"/>
<dbReference type="PATRIC" id="fig|502800.11.peg.4264"/>
<dbReference type="UniPathway" id="UPA00219"/>
<dbReference type="GO" id="GO:0005886">
    <property type="term" value="C:plasma membrane"/>
    <property type="evidence" value="ECO:0007669"/>
    <property type="project" value="UniProtKB-SubCell"/>
</dbReference>
<dbReference type="GO" id="GO:0046872">
    <property type="term" value="F:metal ion binding"/>
    <property type="evidence" value="ECO:0007669"/>
    <property type="project" value="UniProtKB-KW"/>
</dbReference>
<dbReference type="GO" id="GO:0008963">
    <property type="term" value="F:phospho-N-acetylmuramoyl-pentapeptide-transferase activity"/>
    <property type="evidence" value="ECO:0007669"/>
    <property type="project" value="UniProtKB-UniRule"/>
</dbReference>
<dbReference type="GO" id="GO:0051992">
    <property type="term" value="F:UDP-N-acetylmuramoyl-L-alanyl-D-glutamyl-meso-2,6-diaminopimelyl-D-alanyl-D-alanine:undecaprenyl-phosphate transferase activity"/>
    <property type="evidence" value="ECO:0007669"/>
    <property type="project" value="RHEA"/>
</dbReference>
<dbReference type="GO" id="GO:0051301">
    <property type="term" value="P:cell division"/>
    <property type="evidence" value="ECO:0007669"/>
    <property type="project" value="UniProtKB-KW"/>
</dbReference>
<dbReference type="GO" id="GO:0071555">
    <property type="term" value="P:cell wall organization"/>
    <property type="evidence" value="ECO:0007669"/>
    <property type="project" value="UniProtKB-KW"/>
</dbReference>
<dbReference type="GO" id="GO:0009252">
    <property type="term" value="P:peptidoglycan biosynthetic process"/>
    <property type="evidence" value="ECO:0007669"/>
    <property type="project" value="UniProtKB-UniRule"/>
</dbReference>
<dbReference type="GO" id="GO:0008360">
    <property type="term" value="P:regulation of cell shape"/>
    <property type="evidence" value="ECO:0007669"/>
    <property type="project" value="UniProtKB-KW"/>
</dbReference>
<dbReference type="CDD" id="cd06852">
    <property type="entry name" value="GT_MraY"/>
    <property type="match status" value="1"/>
</dbReference>
<dbReference type="HAMAP" id="MF_00038">
    <property type="entry name" value="MraY"/>
    <property type="match status" value="1"/>
</dbReference>
<dbReference type="InterPro" id="IPR000715">
    <property type="entry name" value="Glycosyl_transferase_4"/>
</dbReference>
<dbReference type="InterPro" id="IPR003524">
    <property type="entry name" value="PNAcMuramoyl-5peptid_Trfase"/>
</dbReference>
<dbReference type="InterPro" id="IPR018480">
    <property type="entry name" value="PNAcMuramoyl-5peptid_Trfase_CS"/>
</dbReference>
<dbReference type="NCBIfam" id="TIGR00445">
    <property type="entry name" value="mraY"/>
    <property type="match status" value="1"/>
</dbReference>
<dbReference type="PANTHER" id="PTHR22926">
    <property type="entry name" value="PHOSPHO-N-ACETYLMURAMOYL-PENTAPEPTIDE-TRANSFERASE"/>
    <property type="match status" value="1"/>
</dbReference>
<dbReference type="PANTHER" id="PTHR22926:SF5">
    <property type="entry name" value="PHOSPHO-N-ACETYLMURAMOYL-PENTAPEPTIDE-TRANSFERASE HOMOLOG"/>
    <property type="match status" value="1"/>
</dbReference>
<dbReference type="Pfam" id="PF00953">
    <property type="entry name" value="Glycos_transf_4"/>
    <property type="match status" value="1"/>
</dbReference>
<dbReference type="Pfam" id="PF10555">
    <property type="entry name" value="MraY_sig1"/>
    <property type="match status" value="1"/>
</dbReference>
<dbReference type="PROSITE" id="PS01347">
    <property type="entry name" value="MRAY_1"/>
    <property type="match status" value="1"/>
</dbReference>
<dbReference type="PROSITE" id="PS01348">
    <property type="entry name" value="MRAY_2"/>
    <property type="match status" value="1"/>
</dbReference>
<feature type="chain" id="PRO_1000090694" description="Phospho-N-acetylmuramoyl-pentapeptide-transferase">
    <location>
        <begin position="1"/>
        <end position="360"/>
    </location>
</feature>
<feature type="transmembrane region" description="Helical" evidence="1">
    <location>
        <begin position="27"/>
        <end position="47"/>
    </location>
</feature>
<feature type="transmembrane region" description="Helical" evidence="1">
    <location>
        <begin position="72"/>
        <end position="92"/>
    </location>
</feature>
<feature type="transmembrane region" description="Helical" evidence="1">
    <location>
        <begin position="94"/>
        <end position="114"/>
    </location>
</feature>
<feature type="transmembrane region" description="Helical" evidence="1">
    <location>
        <begin position="132"/>
        <end position="152"/>
    </location>
</feature>
<feature type="transmembrane region" description="Helical" evidence="1">
    <location>
        <begin position="168"/>
        <end position="188"/>
    </location>
</feature>
<feature type="transmembrane region" description="Helical" evidence="1">
    <location>
        <begin position="199"/>
        <end position="219"/>
    </location>
</feature>
<feature type="transmembrane region" description="Helical" evidence="1">
    <location>
        <begin position="236"/>
        <end position="256"/>
    </location>
</feature>
<feature type="transmembrane region" description="Helical" evidence="1">
    <location>
        <begin position="263"/>
        <end position="283"/>
    </location>
</feature>
<feature type="transmembrane region" description="Helical" evidence="1">
    <location>
        <begin position="288"/>
        <end position="308"/>
    </location>
</feature>
<feature type="transmembrane region" description="Helical" evidence="1">
    <location>
        <begin position="338"/>
        <end position="358"/>
    </location>
</feature>
<comment type="function">
    <text evidence="1">Catalyzes the initial step of the lipid cycle reactions in the biosynthesis of the cell wall peptidoglycan: transfers peptidoglycan precursor phospho-MurNAc-pentapeptide from UDP-MurNAc-pentapeptide onto the lipid carrier undecaprenyl phosphate, yielding undecaprenyl-pyrophosphoryl-MurNAc-pentapeptide, known as lipid I.</text>
</comment>
<comment type="catalytic activity">
    <reaction evidence="1">
        <text>UDP-N-acetyl-alpha-D-muramoyl-L-alanyl-gamma-D-glutamyl-meso-2,6-diaminopimeloyl-D-alanyl-D-alanine + di-trans,octa-cis-undecaprenyl phosphate = di-trans,octa-cis-undecaprenyl diphospho-N-acetyl-alpha-D-muramoyl-L-alanyl-D-glutamyl-meso-2,6-diaminopimeloyl-D-alanyl-D-alanine + UMP</text>
        <dbReference type="Rhea" id="RHEA:28386"/>
        <dbReference type="ChEBI" id="CHEBI:57865"/>
        <dbReference type="ChEBI" id="CHEBI:60392"/>
        <dbReference type="ChEBI" id="CHEBI:61386"/>
        <dbReference type="ChEBI" id="CHEBI:61387"/>
        <dbReference type="EC" id="2.7.8.13"/>
    </reaction>
</comment>
<comment type="cofactor">
    <cofactor evidence="1">
        <name>Mg(2+)</name>
        <dbReference type="ChEBI" id="CHEBI:18420"/>
    </cofactor>
</comment>
<comment type="pathway">
    <text evidence="1">Cell wall biogenesis; peptidoglycan biosynthesis.</text>
</comment>
<comment type="subcellular location">
    <subcellularLocation>
        <location evidence="1">Cell inner membrane</location>
        <topology evidence="1">Multi-pass membrane protein</topology>
    </subcellularLocation>
</comment>
<comment type="similarity">
    <text evidence="1">Belongs to the glycosyltransferase 4 family. MraY subfamily.</text>
</comment>
<sequence length="360" mass="40077">MLVWLAEYLVKFYSGFNVFSYLTFRAIVSLLTALFISLWMGPHLIAWLQKLQIGQVVRNDGPESHFSKRGTPTMGGLMILFSITISVLMWAYPSNPYVWCVLFILIGYGIVGFIDDYRKVVRKNTKGLIARWKYFWQSIIALAAAFTMYSIGKDTSATELVVPFFKDIMPQLGLLYVLLAYFVIVGTSNAVNLTDGLDGLAIMPTVFVAAGFALVAWATGNVNFAAYLHIPYLRHAGELVIVCTAIVGAGLGFLWFNTYPAQVFMGDVGSLALGGALGTIAVLLRQEFLLVIMGGVFVVETLSVILQVGSFKLRGQRIFRMAPIHHHYELKGWPEPRVIVRFWIISLMLVLIGLATLKVR</sequence>
<protein>
    <recommendedName>
        <fullName evidence="1">Phospho-N-acetylmuramoyl-pentapeptide-transferase</fullName>
        <ecNumber evidence="1">2.7.8.13</ecNumber>
    </recommendedName>
    <alternativeName>
        <fullName evidence="1">UDP-MurNAc-pentapeptide phosphotransferase</fullName>
    </alternativeName>
</protein>